<name>ATAT_ANOGA</name>
<keyword id="KW-0012">Acyltransferase</keyword>
<keyword id="KW-0025">Alternative splicing</keyword>
<keyword id="KW-1185">Reference proteome</keyword>
<keyword id="KW-0808">Transferase</keyword>
<gene>
    <name type="ORF">AGAP005828</name>
</gene>
<accession>Q7PNM6</accession>
<accession>A7UTW7</accession>
<accession>A7UTW8</accession>
<organism>
    <name type="scientific">Anopheles gambiae</name>
    <name type="common">African malaria mosquito</name>
    <dbReference type="NCBI Taxonomy" id="7165"/>
    <lineage>
        <taxon>Eukaryota</taxon>
        <taxon>Metazoa</taxon>
        <taxon>Ecdysozoa</taxon>
        <taxon>Arthropoda</taxon>
        <taxon>Hexapoda</taxon>
        <taxon>Insecta</taxon>
        <taxon>Pterygota</taxon>
        <taxon>Neoptera</taxon>
        <taxon>Endopterygota</taxon>
        <taxon>Diptera</taxon>
        <taxon>Nematocera</taxon>
        <taxon>Culicoidea</taxon>
        <taxon>Culicidae</taxon>
        <taxon>Anophelinae</taxon>
        <taxon>Anopheles</taxon>
    </lineage>
</organism>
<dbReference type="EC" id="2.3.1.108" evidence="1"/>
<dbReference type="EMBL" id="AAAB01008960">
    <property type="protein sequence ID" value="EDO63742.1"/>
    <property type="molecule type" value="Genomic_DNA"/>
</dbReference>
<dbReference type="EMBL" id="AAAB01008960">
    <property type="protein sequence ID" value="EDO63741.1"/>
    <property type="molecule type" value="Genomic_DNA"/>
</dbReference>
<dbReference type="EMBL" id="AAAB01008960">
    <property type="protein sequence ID" value="EAA11927.5"/>
    <property type="molecule type" value="Genomic_DNA"/>
</dbReference>
<dbReference type="RefSeq" id="XP_001688735.1">
    <property type="nucleotide sequence ID" value="XM_001688683.1"/>
</dbReference>
<dbReference type="RefSeq" id="XP_001688736.1">
    <property type="nucleotide sequence ID" value="XM_001688684.1"/>
</dbReference>
<dbReference type="RefSeq" id="XP_315853.4">
    <property type="nucleotide sequence ID" value="XM_315853.4"/>
</dbReference>
<dbReference type="SMR" id="Q7PNM6"/>
<dbReference type="FunCoup" id="Q7PNM6">
    <property type="interactions" value="26"/>
</dbReference>
<dbReference type="STRING" id="7165.Q7PNM6"/>
<dbReference type="PaxDb" id="7165-AGAP005828-PA"/>
<dbReference type="EnsemblMetazoa" id="AGAP005828-RA">
    <molecule id="Q7PNM6-3"/>
    <property type="protein sequence ID" value="AGAP005828-PA"/>
    <property type="gene ID" value="AGAP005828"/>
</dbReference>
<dbReference type="VEuPathDB" id="VectorBase:AGAMI1_014750"/>
<dbReference type="VEuPathDB" id="VectorBase:AGAP005828"/>
<dbReference type="eggNOG" id="KOG4601">
    <property type="taxonomic scope" value="Eukaryota"/>
</dbReference>
<dbReference type="HOGENOM" id="CLU_025013_4_1_1"/>
<dbReference type="InParanoid" id="Q7PNM6"/>
<dbReference type="OMA" id="FFIGRHP"/>
<dbReference type="PhylomeDB" id="Q7PNM6"/>
<dbReference type="Proteomes" id="UP000007062">
    <property type="component" value="Chromosome 2L"/>
</dbReference>
<dbReference type="GO" id="GO:0005874">
    <property type="term" value="C:microtubule"/>
    <property type="evidence" value="ECO:0007669"/>
    <property type="project" value="InterPro"/>
</dbReference>
<dbReference type="GO" id="GO:0019799">
    <property type="term" value="F:tubulin N-acetyltransferase activity"/>
    <property type="evidence" value="ECO:0000318"/>
    <property type="project" value="GO_Central"/>
</dbReference>
<dbReference type="GO" id="GO:0000226">
    <property type="term" value="P:microtubule cytoskeleton organization"/>
    <property type="evidence" value="ECO:0000318"/>
    <property type="project" value="GO_Central"/>
</dbReference>
<dbReference type="GO" id="GO:0048666">
    <property type="term" value="P:neuron development"/>
    <property type="evidence" value="ECO:0007669"/>
    <property type="project" value="UniProtKB-UniRule"/>
</dbReference>
<dbReference type="GO" id="GO:0070507">
    <property type="term" value="P:regulation of microtubule cytoskeleton organization"/>
    <property type="evidence" value="ECO:0007669"/>
    <property type="project" value="UniProtKB-UniRule"/>
</dbReference>
<dbReference type="CDD" id="cd04301">
    <property type="entry name" value="NAT_SF"/>
    <property type="match status" value="1"/>
</dbReference>
<dbReference type="FunFam" id="3.40.630.30:FF:000060">
    <property type="entry name" value="Alpha-tubulin N-acetyltransferase 1"/>
    <property type="match status" value="1"/>
</dbReference>
<dbReference type="Gene3D" id="3.40.630.30">
    <property type="match status" value="1"/>
</dbReference>
<dbReference type="HAMAP" id="MF_03130">
    <property type="entry name" value="mec17"/>
    <property type="match status" value="1"/>
</dbReference>
<dbReference type="InterPro" id="IPR016181">
    <property type="entry name" value="Acyl_CoA_acyltransferase"/>
</dbReference>
<dbReference type="InterPro" id="IPR038746">
    <property type="entry name" value="Atat"/>
</dbReference>
<dbReference type="InterPro" id="IPR007965">
    <property type="entry name" value="GNAT_ATAT"/>
</dbReference>
<dbReference type="PANTHER" id="PTHR12327">
    <property type="entry name" value="ALPHA-TUBULIN N-ACETYLTRANSFERASE 1"/>
    <property type="match status" value="1"/>
</dbReference>
<dbReference type="PANTHER" id="PTHR12327:SF0">
    <property type="entry name" value="ALPHA-TUBULIN N-ACETYLTRANSFERASE 1"/>
    <property type="match status" value="1"/>
</dbReference>
<dbReference type="Pfam" id="PF05301">
    <property type="entry name" value="Acetyltransf_16"/>
    <property type="match status" value="1"/>
</dbReference>
<dbReference type="SUPFAM" id="SSF55729">
    <property type="entry name" value="Acyl-CoA N-acyltransferases (Nat)"/>
    <property type="match status" value="1"/>
</dbReference>
<dbReference type="PROSITE" id="PS51730">
    <property type="entry name" value="GNAT_ATAT"/>
    <property type="match status" value="1"/>
</dbReference>
<comment type="function">
    <text evidence="1">Specifically acetylates 'Lys-40' in alpha-tubulin on the lumenal side of microtubules. Promotes microtubule destabilization and accelerates microtubule dynamics; this activity may be independent of acetylation activity. Acetylates alpha-tubulin with a slow enzymatic rate, due to a catalytic site that is not optimized for acetyl transfer. Enters the microtubule through each end and diffuses quickly throughout the lumen of microtubules. Acetylates only long/old microtubules because of its slow acetylation rate since it does not have time to act on dynamically unstable microtubules before the enzyme is released.</text>
</comment>
<comment type="catalytic activity">
    <reaction evidence="1">
        <text>L-lysyl-[alpha-tubulin] + acetyl-CoA = N(6)-acetyl-L-lysyl-[alpha-tubulin] + CoA + H(+)</text>
        <dbReference type="Rhea" id="RHEA:15277"/>
        <dbReference type="Rhea" id="RHEA-COMP:11278"/>
        <dbReference type="Rhea" id="RHEA-COMP:11279"/>
        <dbReference type="ChEBI" id="CHEBI:15378"/>
        <dbReference type="ChEBI" id="CHEBI:29969"/>
        <dbReference type="ChEBI" id="CHEBI:57287"/>
        <dbReference type="ChEBI" id="CHEBI:57288"/>
        <dbReference type="ChEBI" id="CHEBI:61930"/>
        <dbReference type="EC" id="2.3.1.108"/>
    </reaction>
</comment>
<comment type="alternative products">
    <event type="alternative splicing"/>
    <isoform>
        <id>Q7PNM6-1</id>
        <name>A</name>
        <sequence type="displayed"/>
    </isoform>
    <isoform>
        <id>Q7PNM6-2</id>
        <name>B</name>
        <sequence type="described" ref="VSP_040234 VSP_040235"/>
    </isoform>
    <isoform>
        <id>Q7PNM6-3</id>
        <name>C</name>
        <sequence type="described" ref="VSP_040232 VSP_040233"/>
    </isoform>
</comment>
<comment type="similarity">
    <text evidence="1">Belongs to the acetyltransferase ATAT1 family.</text>
</comment>
<reference key="1">
    <citation type="journal article" date="2002" name="Science">
        <title>The genome sequence of the malaria mosquito Anopheles gambiae.</title>
        <authorList>
            <person name="Holt R.A."/>
            <person name="Subramanian G.M."/>
            <person name="Halpern A."/>
            <person name="Sutton G.G."/>
            <person name="Charlab R."/>
            <person name="Nusskern D.R."/>
            <person name="Wincker P."/>
            <person name="Clark A.G."/>
            <person name="Ribeiro J.M.C."/>
            <person name="Wides R."/>
            <person name="Salzberg S.L."/>
            <person name="Loftus B.J."/>
            <person name="Yandell M.D."/>
            <person name="Majoros W.H."/>
            <person name="Rusch D.B."/>
            <person name="Lai Z."/>
            <person name="Kraft C.L."/>
            <person name="Abril J.F."/>
            <person name="Anthouard V."/>
            <person name="Arensburger P."/>
            <person name="Atkinson P.W."/>
            <person name="Baden H."/>
            <person name="de Berardinis V."/>
            <person name="Baldwin D."/>
            <person name="Benes V."/>
            <person name="Biedler J."/>
            <person name="Blass C."/>
            <person name="Bolanos R."/>
            <person name="Boscus D."/>
            <person name="Barnstead M."/>
            <person name="Cai S."/>
            <person name="Center A."/>
            <person name="Chaturverdi K."/>
            <person name="Christophides G.K."/>
            <person name="Chrystal M.A.M."/>
            <person name="Clamp M."/>
            <person name="Cravchik A."/>
            <person name="Curwen V."/>
            <person name="Dana A."/>
            <person name="Delcher A."/>
            <person name="Dew I."/>
            <person name="Evans C.A."/>
            <person name="Flanigan M."/>
            <person name="Grundschober-Freimoser A."/>
            <person name="Friedli L."/>
            <person name="Gu Z."/>
            <person name="Guan P."/>
            <person name="Guigo R."/>
            <person name="Hillenmeyer M.E."/>
            <person name="Hladun S.L."/>
            <person name="Hogan J.R."/>
            <person name="Hong Y.S."/>
            <person name="Hoover J."/>
            <person name="Jaillon O."/>
            <person name="Ke Z."/>
            <person name="Kodira C.D."/>
            <person name="Kokoza E."/>
            <person name="Koutsos A."/>
            <person name="Letunic I."/>
            <person name="Levitsky A.A."/>
            <person name="Liang Y."/>
            <person name="Lin J.-J."/>
            <person name="Lobo N.F."/>
            <person name="Lopez J.R."/>
            <person name="Malek J.A."/>
            <person name="McIntosh T.C."/>
            <person name="Meister S."/>
            <person name="Miller J.R."/>
            <person name="Mobarry C."/>
            <person name="Mongin E."/>
            <person name="Murphy S.D."/>
            <person name="O'Brochta D.A."/>
            <person name="Pfannkoch C."/>
            <person name="Qi R."/>
            <person name="Regier M.A."/>
            <person name="Remington K."/>
            <person name="Shao H."/>
            <person name="Sharakhova M.V."/>
            <person name="Sitter C.D."/>
            <person name="Shetty J."/>
            <person name="Smith T.J."/>
            <person name="Strong R."/>
            <person name="Sun J."/>
            <person name="Thomasova D."/>
            <person name="Ton L.Q."/>
            <person name="Topalis P."/>
            <person name="Tu Z.J."/>
            <person name="Unger M.F."/>
            <person name="Walenz B."/>
            <person name="Wang A.H."/>
            <person name="Wang J."/>
            <person name="Wang M."/>
            <person name="Wang X."/>
            <person name="Woodford K.J."/>
            <person name="Wortman J.R."/>
            <person name="Wu M."/>
            <person name="Yao A."/>
            <person name="Zdobnov E.M."/>
            <person name="Zhang H."/>
            <person name="Zhao Q."/>
            <person name="Zhao S."/>
            <person name="Zhu S.C."/>
            <person name="Zhimulev I."/>
            <person name="Coluzzi M."/>
            <person name="della Torre A."/>
            <person name="Roth C.W."/>
            <person name="Louis C."/>
            <person name="Kalush F."/>
            <person name="Mural R.J."/>
            <person name="Myers E.W."/>
            <person name="Adams M.D."/>
            <person name="Smith H.O."/>
            <person name="Broder S."/>
            <person name="Gardner M.J."/>
            <person name="Fraser C.M."/>
            <person name="Birney E."/>
            <person name="Bork P."/>
            <person name="Brey P.T."/>
            <person name="Venter J.C."/>
            <person name="Weissenbach J."/>
            <person name="Kafatos F.C."/>
            <person name="Collins F.H."/>
            <person name="Hoffman S.L."/>
        </authorList>
    </citation>
    <scope>NUCLEOTIDE SEQUENCE [LARGE SCALE GENOMIC DNA]</scope>
    <source>
        <strain>PEST</strain>
    </source>
</reference>
<proteinExistence type="inferred from homology"/>
<evidence type="ECO:0000255" key="1">
    <source>
        <dbReference type="HAMAP-Rule" id="MF_03130"/>
    </source>
</evidence>
<evidence type="ECO:0000256" key="2">
    <source>
        <dbReference type="SAM" id="MobiDB-lite"/>
    </source>
</evidence>
<evidence type="ECO:0000305" key="3"/>
<protein>
    <recommendedName>
        <fullName evidence="1">Alpha-tubulin N-acetyltransferase</fullName>
        <shortName evidence="1">Alpha-TAT</shortName>
        <shortName evidence="1">TAT</shortName>
        <ecNumber evidence="1">2.3.1.108</ecNumber>
    </recommendedName>
    <alternativeName>
        <fullName evidence="1">Acetyltransferase mec-17 homolog</fullName>
    </alternativeName>
</protein>
<feature type="chain" id="PRO_0000402071" description="Alpha-tubulin N-acetyltransferase">
    <location>
        <begin position="1"/>
        <end position="483"/>
    </location>
</feature>
<feature type="domain" description="N-acetyltransferase" evidence="1">
    <location>
        <begin position="1"/>
        <end position="186"/>
    </location>
</feature>
<feature type="region of interest" description="Disordered" evidence="2">
    <location>
        <begin position="204"/>
        <end position="231"/>
    </location>
</feature>
<feature type="region of interest" description="Disordered" evidence="2">
    <location>
        <begin position="330"/>
        <end position="395"/>
    </location>
</feature>
<feature type="region of interest" description="Disordered" evidence="2">
    <location>
        <begin position="437"/>
        <end position="472"/>
    </location>
</feature>
<feature type="compositionally biased region" description="Basic and acidic residues" evidence="2">
    <location>
        <begin position="347"/>
        <end position="369"/>
    </location>
</feature>
<feature type="compositionally biased region" description="Low complexity" evidence="2">
    <location>
        <begin position="370"/>
        <end position="383"/>
    </location>
</feature>
<feature type="binding site" evidence="1">
    <location>
        <begin position="120"/>
        <end position="133"/>
    </location>
    <ligand>
        <name>acetyl-CoA</name>
        <dbReference type="ChEBI" id="CHEBI:57288"/>
    </ligand>
</feature>
<feature type="binding site" evidence="1">
    <location>
        <begin position="156"/>
        <end position="165"/>
    </location>
    <ligand>
        <name>acetyl-CoA</name>
        <dbReference type="ChEBI" id="CHEBI:57288"/>
    </ligand>
</feature>
<feature type="site" description="Crucial for catalytic activity" evidence="1">
    <location>
        <position position="57"/>
    </location>
</feature>
<feature type="splice variant" id="VSP_040232" description="In isoform C." evidence="3">
    <original>S</original>
    <variation>R</variation>
    <location>
        <position position="206"/>
    </location>
</feature>
<feature type="splice variant" id="VSP_040233" description="In isoform C." evidence="3">
    <location>
        <begin position="207"/>
        <end position="483"/>
    </location>
</feature>
<feature type="splice variant" id="VSP_040234" description="In isoform B." evidence="3">
    <original>EEQELDQRLADEMERCVE</original>
    <variation>IIHNSPTTVSTEPNSNFT</variation>
    <location>
        <begin position="285"/>
        <end position="302"/>
    </location>
</feature>
<feature type="splice variant" id="VSP_040235" description="In isoform B." evidence="3">
    <location>
        <begin position="303"/>
        <end position="483"/>
    </location>
</feature>
<sequence>MEFRFNMHPLFRARIVRINNSLLPTGFVAQSRRVALDATAQISEIINTIGSMSAQAQGLSVPVTTAQKLRNSDHHIYLMFESNDRNGLVVGILKVGRKSLYVFDPSGETVNVTAPCVLDFYVHESRQRGGLGRELFEHMLREENIQPDELAIDRPSEKLLGFLQKHYGLSKKIPQMNNFVVYEGFFASKAQNSTDIDGRRMHITASPNTNLFGPTFTTTEERRRSTSQTRTNVAPMPIIAQPPVGRYAAKRPTCSMAQVNHYSSMVGKISFPEENTGNGKRSVFEEQELDQRLADEMERCVELGAGGDEPDASRYTPHHGLEVKFADQPETLPYDDMPEPGPDPDPYDFHPHHLELHDDTEGGGSHRDQSLSPQSVSQQASPVHPAGSDYGVLGSRKPARYTKQNTGLKNISFGVGAAVMPSGKMEFDQEENEGFGSVKINRPIGKSGTRGSLHDDNESVHSNGSQQGGGGHFDLKFYHNKLW</sequence>